<reference key="1">
    <citation type="journal article" date="2009" name="PLoS Genet.">
        <title>Organised genome dynamics in the Escherichia coli species results in highly diverse adaptive paths.</title>
        <authorList>
            <person name="Touchon M."/>
            <person name="Hoede C."/>
            <person name="Tenaillon O."/>
            <person name="Barbe V."/>
            <person name="Baeriswyl S."/>
            <person name="Bidet P."/>
            <person name="Bingen E."/>
            <person name="Bonacorsi S."/>
            <person name="Bouchier C."/>
            <person name="Bouvet O."/>
            <person name="Calteau A."/>
            <person name="Chiapello H."/>
            <person name="Clermont O."/>
            <person name="Cruveiller S."/>
            <person name="Danchin A."/>
            <person name="Diard M."/>
            <person name="Dossat C."/>
            <person name="Karoui M.E."/>
            <person name="Frapy E."/>
            <person name="Garry L."/>
            <person name="Ghigo J.M."/>
            <person name="Gilles A.M."/>
            <person name="Johnson J."/>
            <person name="Le Bouguenec C."/>
            <person name="Lescat M."/>
            <person name="Mangenot S."/>
            <person name="Martinez-Jehanne V."/>
            <person name="Matic I."/>
            <person name="Nassif X."/>
            <person name="Oztas S."/>
            <person name="Petit M.A."/>
            <person name="Pichon C."/>
            <person name="Rouy Z."/>
            <person name="Ruf C.S."/>
            <person name="Schneider D."/>
            <person name="Tourret J."/>
            <person name="Vacherie B."/>
            <person name="Vallenet D."/>
            <person name="Medigue C."/>
            <person name="Rocha E.P.C."/>
            <person name="Denamur E."/>
        </authorList>
    </citation>
    <scope>NUCLEOTIDE SEQUENCE [LARGE SCALE GENOMIC DNA]</scope>
    <source>
        <strain>55989 / EAEC</strain>
    </source>
</reference>
<keyword id="KW-0001">2Fe-2S</keyword>
<keyword id="KW-0963">Cytoplasm</keyword>
<keyword id="KW-0408">Iron</keyword>
<keyword id="KW-0411">Iron-sulfur</keyword>
<keyword id="KW-0479">Metal-binding</keyword>
<keyword id="KW-0560">Oxidoreductase</keyword>
<keyword id="KW-1185">Reference proteome</keyword>
<gene>
    <name evidence="1" type="primary">hcp</name>
    <name type="ordered locus">EC55989_0918</name>
</gene>
<proteinExistence type="inferred from homology"/>
<sequence>MFCVQCEQTIRTPAGNGCSYAQGMCGKTAETSDLQDLLIAALQGLSAWAVKAREYGIINHDVDSFAPRAFFSTLTNVNFDSPRIVGYAREAIALREALKAQCLAVDANARVDNPMADLQLVSDDLGELQRQAAEFTPNKDKAAIGENILGLRLLCLYGLKGAAAYMEHAHVLGQYDNDIYAQYHKIMAWLGTWPADMNALLECSMEIGQMNFKVMSILDAGETGKYGHPTPTQVNVKATAGKCILISGHDLKDLYNLLEQTEGTGVNVYTHGEMLPAHGYPELRKFKHLVGNYGSGWQNQQVEFARFPGPIVMTSNCIIDPTVGAYDDRIWTRSIVGWPGVRHLDGEDFSAVIAQAQQMAGFPYSEIPHLITVGFGRQTLLGAADTLIDLVSREKLRHIFLLGGCDGARGERHYFTDFATSVPDDCLILTLACGKYRFNKLEFGDIEGLPRLVDAGQCNDAYSAIILAVTLAEKLGCGVNDLPLSLVLSWFEQKAIVILLTLLSLGVKNIVTGPTAPGFLTPDLLAVLNEKFGLRSITTVEEDMKQLLSA</sequence>
<name>HCP_ECO55</name>
<organism>
    <name type="scientific">Escherichia coli (strain 55989 / EAEC)</name>
    <dbReference type="NCBI Taxonomy" id="585055"/>
    <lineage>
        <taxon>Bacteria</taxon>
        <taxon>Pseudomonadati</taxon>
        <taxon>Pseudomonadota</taxon>
        <taxon>Gammaproteobacteria</taxon>
        <taxon>Enterobacterales</taxon>
        <taxon>Enterobacteriaceae</taxon>
        <taxon>Escherichia</taxon>
    </lineage>
</organism>
<accession>B7LD66</accession>
<feature type="chain" id="PRO_1000118019" description="Hydroxylamine reductase">
    <location>
        <begin position="1"/>
        <end position="550"/>
    </location>
</feature>
<feature type="binding site" evidence="1">
    <location>
        <position position="3"/>
    </location>
    <ligand>
        <name>[2Fe-2S] cluster</name>
        <dbReference type="ChEBI" id="CHEBI:190135"/>
    </ligand>
</feature>
<feature type="binding site" evidence="1">
    <location>
        <position position="6"/>
    </location>
    <ligand>
        <name>[2Fe-2S] cluster</name>
        <dbReference type="ChEBI" id="CHEBI:190135"/>
    </ligand>
</feature>
<feature type="binding site" evidence="1">
    <location>
        <position position="18"/>
    </location>
    <ligand>
        <name>[2Fe-2S] cluster</name>
        <dbReference type="ChEBI" id="CHEBI:190135"/>
    </ligand>
</feature>
<feature type="binding site" evidence="1">
    <location>
        <position position="25"/>
    </location>
    <ligand>
        <name>[2Fe-2S] cluster</name>
        <dbReference type="ChEBI" id="CHEBI:190135"/>
    </ligand>
</feature>
<feature type="binding site" evidence="1">
    <location>
        <position position="249"/>
    </location>
    <ligand>
        <name>hybrid [4Fe-2O-2S] cluster</name>
        <dbReference type="ChEBI" id="CHEBI:60519"/>
    </ligand>
</feature>
<feature type="binding site" evidence="1">
    <location>
        <position position="273"/>
    </location>
    <ligand>
        <name>hybrid [4Fe-2O-2S] cluster</name>
        <dbReference type="ChEBI" id="CHEBI:60519"/>
    </ligand>
</feature>
<feature type="binding site" evidence="1">
    <location>
        <position position="317"/>
    </location>
    <ligand>
        <name>hybrid [4Fe-2O-2S] cluster</name>
        <dbReference type="ChEBI" id="CHEBI:60519"/>
    </ligand>
</feature>
<feature type="binding site" description="via persulfide group" evidence="1">
    <location>
        <position position="405"/>
    </location>
    <ligand>
        <name>hybrid [4Fe-2O-2S] cluster</name>
        <dbReference type="ChEBI" id="CHEBI:60519"/>
    </ligand>
</feature>
<feature type="binding site" evidence="1">
    <location>
        <position position="433"/>
    </location>
    <ligand>
        <name>hybrid [4Fe-2O-2S] cluster</name>
        <dbReference type="ChEBI" id="CHEBI:60519"/>
    </ligand>
</feature>
<feature type="binding site" evidence="1">
    <location>
        <position position="458"/>
    </location>
    <ligand>
        <name>hybrid [4Fe-2O-2S] cluster</name>
        <dbReference type="ChEBI" id="CHEBI:60519"/>
    </ligand>
</feature>
<feature type="binding site" evidence="1">
    <location>
        <position position="492"/>
    </location>
    <ligand>
        <name>hybrid [4Fe-2O-2S] cluster</name>
        <dbReference type="ChEBI" id="CHEBI:60519"/>
    </ligand>
</feature>
<feature type="binding site" evidence="1">
    <location>
        <position position="494"/>
    </location>
    <ligand>
        <name>hybrid [4Fe-2O-2S] cluster</name>
        <dbReference type="ChEBI" id="CHEBI:60519"/>
    </ligand>
</feature>
<feature type="modified residue" description="Cysteine persulfide" evidence="1">
    <location>
        <position position="405"/>
    </location>
</feature>
<comment type="function">
    <text evidence="1">Catalyzes the reduction of hydroxylamine to form NH(3) and H(2)O.</text>
</comment>
<comment type="catalytic activity">
    <reaction evidence="1">
        <text>A + NH4(+) + H2O = hydroxylamine + AH2 + H(+)</text>
        <dbReference type="Rhea" id="RHEA:22052"/>
        <dbReference type="ChEBI" id="CHEBI:13193"/>
        <dbReference type="ChEBI" id="CHEBI:15377"/>
        <dbReference type="ChEBI" id="CHEBI:15378"/>
        <dbReference type="ChEBI" id="CHEBI:15429"/>
        <dbReference type="ChEBI" id="CHEBI:17499"/>
        <dbReference type="ChEBI" id="CHEBI:28938"/>
        <dbReference type="EC" id="1.7.99.1"/>
    </reaction>
</comment>
<comment type="cofactor">
    <cofactor evidence="1">
        <name>[2Fe-2S] cluster</name>
        <dbReference type="ChEBI" id="CHEBI:190135"/>
    </cofactor>
    <text evidence="1">Binds 1 [2Fe-2S] cluster.</text>
</comment>
<comment type="cofactor">
    <cofactor evidence="1">
        <name>hybrid [4Fe-2O-2S] cluster</name>
        <dbReference type="ChEBI" id="CHEBI:60519"/>
    </cofactor>
    <text evidence="1">Binds 1 hybrid [4Fe-2O-2S] cluster.</text>
</comment>
<comment type="subcellular location">
    <subcellularLocation>
        <location evidence="1">Cytoplasm</location>
    </subcellularLocation>
</comment>
<comment type="similarity">
    <text evidence="1">Belongs to the HCP family.</text>
</comment>
<protein>
    <recommendedName>
        <fullName evidence="1">Hydroxylamine reductase</fullName>
        <ecNumber evidence="1">1.7.99.1</ecNumber>
    </recommendedName>
    <alternativeName>
        <fullName evidence="1">Hybrid-cluster protein</fullName>
        <shortName evidence="1">HCP</shortName>
    </alternativeName>
    <alternativeName>
        <fullName evidence="1">Prismane protein</fullName>
    </alternativeName>
</protein>
<evidence type="ECO:0000255" key="1">
    <source>
        <dbReference type="HAMAP-Rule" id="MF_00069"/>
    </source>
</evidence>
<dbReference type="EC" id="1.7.99.1" evidence="1"/>
<dbReference type="EMBL" id="CU928145">
    <property type="protein sequence ID" value="CAU96783.1"/>
    <property type="molecule type" value="Genomic_DNA"/>
</dbReference>
<dbReference type="RefSeq" id="WP_000458817.1">
    <property type="nucleotide sequence ID" value="NC_011748.1"/>
</dbReference>
<dbReference type="SMR" id="B7LD66"/>
<dbReference type="GeneID" id="75202475"/>
<dbReference type="KEGG" id="eck:EC55989_0918"/>
<dbReference type="HOGENOM" id="CLU_038344_2_0_6"/>
<dbReference type="Proteomes" id="UP000000746">
    <property type="component" value="Chromosome"/>
</dbReference>
<dbReference type="GO" id="GO:0005737">
    <property type="term" value="C:cytoplasm"/>
    <property type="evidence" value="ECO:0007669"/>
    <property type="project" value="UniProtKB-SubCell"/>
</dbReference>
<dbReference type="GO" id="GO:0051537">
    <property type="term" value="F:2 iron, 2 sulfur cluster binding"/>
    <property type="evidence" value="ECO:0007669"/>
    <property type="project" value="UniProtKB-KW"/>
</dbReference>
<dbReference type="GO" id="GO:0050418">
    <property type="term" value="F:hydroxylamine reductase activity"/>
    <property type="evidence" value="ECO:0007669"/>
    <property type="project" value="UniProtKB-UniRule"/>
</dbReference>
<dbReference type="GO" id="GO:0046872">
    <property type="term" value="F:metal ion binding"/>
    <property type="evidence" value="ECO:0007669"/>
    <property type="project" value="UniProtKB-KW"/>
</dbReference>
<dbReference type="GO" id="GO:0004601">
    <property type="term" value="F:peroxidase activity"/>
    <property type="evidence" value="ECO:0007669"/>
    <property type="project" value="TreeGrafter"/>
</dbReference>
<dbReference type="GO" id="GO:0042542">
    <property type="term" value="P:response to hydrogen peroxide"/>
    <property type="evidence" value="ECO:0007669"/>
    <property type="project" value="TreeGrafter"/>
</dbReference>
<dbReference type="CDD" id="cd01914">
    <property type="entry name" value="HCP"/>
    <property type="match status" value="1"/>
</dbReference>
<dbReference type="FunFam" id="1.20.1270.20:FF:000001">
    <property type="entry name" value="Hydroxylamine reductase"/>
    <property type="match status" value="1"/>
</dbReference>
<dbReference type="FunFam" id="1.20.1270.20:FF:000002">
    <property type="entry name" value="Hydroxylamine reductase"/>
    <property type="match status" value="1"/>
</dbReference>
<dbReference type="FunFam" id="3.40.50.2030:FF:000001">
    <property type="entry name" value="Hydroxylamine reductase"/>
    <property type="match status" value="1"/>
</dbReference>
<dbReference type="FunFam" id="3.40.50.2030:FF:000002">
    <property type="entry name" value="Hydroxylamine reductase"/>
    <property type="match status" value="1"/>
</dbReference>
<dbReference type="Gene3D" id="1.20.1270.20">
    <property type="match status" value="2"/>
</dbReference>
<dbReference type="Gene3D" id="3.40.50.2030">
    <property type="match status" value="2"/>
</dbReference>
<dbReference type="HAMAP" id="MF_00069">
    <property type="entry name" value="Hydroxylam_reduct"/>
    <property type="match status" value="1"/>
</dbReference>
<dbReference type="InterPro" id="IPR004137">
    <property type="entry name" value="HCP/CODH"/>
</dbReference>
<dbReference type="InterPro" id="IPR010048">
    <property type="entry name" value="Hydroxylam_reduct"/>
</dbReference>
<dbReference type="InterPro" id="IPR016099">
    <property type="entry name" value="Prismane-like_a/b-sand"/>
</dbReference>
<dbReference type="InterPro" id="IPR011254">
    <property type="entry name" value="Prismane-like_sf"/>
</dbReference>
<dbReference type="InterPro" id="IPR016100">
    <property type="entry name" value="Prismane_a-bundle"/>
</dbReference>
<dbReference type="NCBIfam" id="TIGR01703">
    <property type="entry name" value="hybrid_clust"/>
    <property type="match status" value="1"/>
</dbReference>
<dbReference type="NCBIfam" id="NF003658">
    <property type="entry name" value="PRK05290.1"/>
    <property type="match status" value="1"/>
</dbReference>
<dbReference type="PANTHER" id="PTHR30109">
    <property type="entry name" value="HYDROXYLAMINE REDUCTASE"/>
    <property type="match status" value="1"/>
</dbReference>
<dbReference type="PANTHER" id="PTHR30109:SF0">
    <property type="entry name" value="HYDROXYLAMINE REDUCTASE"/>
    <property type="match status" value="1"/>
</dbReference>
<dbReference type="Pfam" id="PF03063">
    <property type="entry name" value="Prismane"/>
    <property type="match status" value="1"/>
</dbReference>
<dbReference type="PIRSF" id="PIRSF000076">
    <property type="entry name" value="HCP"/>
    <property type="match status" value="1"/>
</dbReference>
<dbReference type="SUPFAM" id="SSF56821">
    <property type="entry name" value="Prismane protein-like"/>
    <property type="match status" value="1"/>
</dbReference>